<gene>
    <name type="primary">RSA3</name>
    <name type="ordered locus">AGR181W</name>
</gene>
<organism>
    <name type="scientific">Eremothecium gossypii (strain ATCC 10895 / CBS 109.51 / FGSC 9923 / NRRL Y-1056)</name>
    <name type="common">Yeast</name>
    <name type="synonym">Ashbya gossypii</name>
    <dbReference type="NCBI Taxonomy" id="284811"/>
    <lineage>
        <taxon>Eukaryota</taxon>
        <taxon>Fungi</taxon>
        <taxon>Dikarya</taxon>
        <taxon>Ascomycota</taxon>
        <taxon>Saccharomycotina</taxon>
        <taxon>Saccharomycetes</taxon>
        <taxon>Saccharomycetales</taxon>
        <taxon>Saccharomycetaceae</taxon>
        <taxon>Eremothecium</taxon>
    </lineage>
</organism>
<evidence type="ECO:0000250" key="1"/>
<evidence type="ECO:0000256" key="2">
    <source>
        <dbReference type="SAM" id="MobiDB-lite"/>
    </source>
</evidence>
<evidence type="ECO:0000305" key="3"/>
<comment type="function">
    <text evidence="1">Required for efficient biogenesis of the 60S ribosomal subunit.</text>
</comment>
<comment type="subunit">
    <text evidence="1">Associates with nucleolar pre-ribosomal particles.</text>
</comment>
<comment type="subcellular location">
    <subcellularLocation>
        <location evidence="1">Nucleus</location>
        <location evidence="1">Nucleolus</location>
    </subcellularLocation>
</comment>
<comment type="similarity">
    <text evidence="3">Belongs to the RSA3 family.</text>
</comment>
<keyword id="KW-0539">Nucleus</keyword>
<keyword id="KW-1185">Reference proteome</keyword>
<keyword id="KW-0687">Ribonucleoprotein</keyword>
<keyword id="KW-0690">Ribosome biogenesis</keyword>
<proteinExistence type="inferred from homology"/>
<sequence>MSTEISAAAPRRAANGKKRANRRKKRRTQAESDSSDSSDSSESSQPSADEQEAKTDDVAVELSDVELSDSENKTVSHSEKLDDESKAKLKSIQLTATDLSSKFALQQNRNIDLQKAGREVDHGLEKLAKLDAQTSEQESGRLKTGYINMLFEHVGEDVNQLRNAPDFTPKSLVVLANALKDGGDMFDIESLRALVDNK</sequence>
<accession>Q74ZL7</accession>
<reference key="1">
    <citation type="journal article" date="2004" name="Science">
        <title>The Ashbya gossypii genome as a tool for mapping the ancient Saccharomyces cerevisiae genome.</title>
        <authorList>
            <person name="Dietrich F.S."/>
            <person name="Voegeli S."/>
            <person name="Brachat S."/>
            <person name="Lerch A."/>
            <person name="Gates K."/>
            <person name="Steiner S."/>
            <person name="Mohr C."/>
            <person name="Poehlmann R."/>
            <person name="Luedi P."/>
            <person name="Choi S."/>
            <person name="Wing R.A."/>
            <person name="Flavier A."/>
            <person name="Gaffney T.D."/>
            <person name="Philippsen P."/>
        </authorList>
    </citation>
    <scope>NUCLEOTIDE SEQUENCE [LARGE SCALE GENOMIC DNA]</scope>
    <source>
        <strain>ATCC 10895 / CBS 109.51 / FGSC 9923 / NRRL Y-1056</strain>
    </source>
</reference>
<reference key="2">
    <citation type="journal article" date="2013" name="G3 (Bethesda)">
        <title>Genomes of Ashbya fungi isolated from insects reveal four mating-type loci, numerous translocations, lack of transposons, and distinct gene duplications.</title>
        <authorList>
            <person name="Dietrich F.S."/>
            <person name="Voegeli S."/>
            <person name="Kuo S."/>
            <person name="Philippsen P."/>
        </authorList>
    </citation>
    <scope>GENOME REANNOTATION</scope>
    <source>
        <strain>ATCC 10895 / CBS 109.51 / FGSC 9923 / NRRL Y-1056</strain>
    </source>
</reference>
<dbReference type="EMBL" id="AE016820">
    <property type="protein sequence ID" value="AAS54671.1"/>
    <property type="molecule type" value="Genomic_DNA"/>
</dbReference>
<dbReference type="RefSeq" id="NP_986847.1">
    <property type="nucleotide sequence ID" value="NM_211909.1"/>
</dbReference>
<dbReference type="FunCoup" id="Q74ZL7">
    <property type="interactions" value="296"/>
</dbReference>
<dbReference type="STRING" id="284811.Q74ZL7"/>
<dbReference type="EnsemblFungi" id="AAS54671">
    <property type="protein sequence ID" value="AAS54671"/>
    <property type="gene ID" value="AGOS_AGR181W"/>
</dbReference>
<dbReference type="GeneID" id="4623149"/>
<dbReference type="KEGG" id="ago:AGOS_AGR181W"/>
<dbReference type="eggNOG" id="ENOG502S5DP">
    <property type="taxonomic scope" value="Eukaryota"/>
</dbReference>
<dbReference type="HOGENOM" id="CLU_119118_0_0_1"/>
<dbReference type="InParanoid" id="Q74ZL7"/>
<dbReference type="OMA" id="DAHNNNK"/>
<dbReference type="OrthoDB" id="69550at2759"/>
<dbReference type="Proteomes" id="UP000000591">
    <property type="component" value="Chromosome VII"/>
</dbReference>
<dbReference type="GO" id="GO:0005730">
    <property type="term" value="C:nucleolus"/>
    <property type="evidence" value="ECO:0007669"/>
    <property type="project" value="UniProtKB-SubCell"/>
</dbReference>
<dbReference type="GO" id="GO:0030687">
    <property type="term" value="C:preribosome, large subunit precursor"/>
    <property type="evidence" value="ECO:0000318"/>
    <property type="project" value="GO_Central"/>
</dbReference>
<dbReference type="GO" id="GO:0000027">
    <property type="term" value="P:ribosomal large subunit assembly"/>
    <property type="evidence" value="ECO:0000318"/>
    <property type="project" value="GO_Central"/>
</dbReference>
<dbReference type="InterPro" id="IPR051898">
    <property type="entry name" value="Ribosome_Assembly_3"/>
</dbReference>
<dbReference type="InterPro" id="IPR028217">
    <property type="entry name" value="Rsa3_C"/>
</dbReference>
<dbReference type="PANTHER" id="PTHR28127">
    <property type="entry name" value="RIBOSOME ASSEMBLY PROTEIN 3"/>
    <property type="match status" value="1"/>
</dbReference>
<dbReference type="PANTHER" id="PTHR28127:SF1">
    <property type="entry name" value="RIBOSOME ASSEMBLY PROTEIN 3"/>
    <property type="match status" value="1"/>
</dbReference>
<dbReference type="Pfam" id="PF14615">
    <property type="entry name" value="Rsa3"/>
    <property type="match status" value="1"/>
</dbReference>
<protein>
    <recommendedName>
        <fullName>Ribosome assembly protein 3</fullName>
    </recommendedName>
</protein>
<name>RSA3_EREGS</name>
<feature type="chain" id="PRO_0000097461" description="Ribosome assembly protein 3">
    <location>
        <begin position="1"/>
        <end position="198"/>
    </location>
</feature>
<feature type="region of interest" description="Disordered" evidence="2">
    <location>
        <begin position="1"/>
        <end position="84"/>
    </location>
</feature>
<feature type="compositionally biased region" description="Basic residues" evidence="2">
    <location>
        <begin position="14"/>
        <end position="27"/>
    </location>
</feature>
<feature type="compositionally biased region" description="Low complexity" evidence="2">
    <location>
        <begin position="31"/>
        <end position="48"/>
    </location>
</feature>
<feature type="compositionally biased region" description="Basic and acidic residues" evidence="2">
    <location>
        <begin position="70"/>
        <end position="84"/>
    </location>
</feature>